<keyword id="KW-0010">Activator</keyword>
<keyword id="KW-0238">DNA-binding</keyword>
<keyword id="KW-0479">Metal-binding</keyword>
<keyword id="KW-0539">Nucleus</keyword>
<keyword id="KW-1185">Reference proteome</keyword>
<keyword id="KW-0677">Repeat</keyword>
<keyword id="KW-0678">Repressor</keyword>
<keyword id="KW-0804">Transcription</keyword>
<keyword id="KW-0805">Transcription regulation</keyword>
<keyword id="KW-0862">Zinc</keyword>
<keyword id="KW-0863">Zinc-finger</keyword>
<dbReference type="EMBL" id="AABR03122623">
    <property type="status" value="NOT_ANNOTATED_CDS"/>
    <property type="molecule type" value="Genomic_DNA"/>
</dbReference>
<dbReference type="RefSeq" id="NP_001364162.1">
    <property type="nucleotide sequence ID" value="NM_001377233.1"/>
</dbReference>
<dbReference type="RefSeq" id="XP_008756640.1">
    <property type="nucleotide sequence ID" value="XM_008758418.1"/>
</dbReference>
<dbReference type="RefSeq" id="XP_008771447.1">
    <property type="nucleotide sequence ID" value="XM_008773225.1"/>
</dbReference>
<dbReference type="SMR" id="P0C6P6"/>
<dbReference type="FunCoup" id="P0C6P6">
    <property type="interactions" value="1783"/>
</dbReference>
<dbReference type="PhosphoSitePlus" id="P0C6P6"/>
<dbReference type="Ensembl" id="ENSRNOT00000099895.1">
    <property type="protein sequence ID" value="ENSRNOP00000081160.1"/>
    <property type="gene ID" value="ENSRNOG00000007644.8"/>
</dbReference>
<dbReference type="Ensembl" id="ENSRNOT00000105689.1">
    <property type="protein sequence ID" value="ENSRNOP00000078442.1"/>
    <property type="gene ID" value="ENSRNOG00000007644.8"/>
</dbReference>
<dbReference type="Ensembl" id="ENSRNOT00000117269.1">
    <property type="protein sequence ID" value="ENSRNOP00000089986.1"/>
    <property type="gene ID" value="ENSRNOG00000007644.8"/>
</dbReference>
<dbReference type="GeneID" id="103690827"/>
<dbReference type="AGR" id="RGD:2324567"/>
<dbReference type="RGD" id="2324567">
    <property type="gene designation" value="Yy2"/>
</dbReference>
<dbReference type="GeneTree" id="ENSGT00510000048066"/>
<dbReference type="InParanoid" id="P0C6P6"/>
<dbReference type="PhylomeDB" id="P0C6P6"/>
<dbReference type="PRO" id="PR:P0C6P6"/>
<dbReference type="Proteomes" id="UP000002494">
    <property type="component" value="Chromosome X"/>
</dbReference>
<dbReference type="GO" id="GO:0000785">
    <property type="term" value="C:chromatin"/>
    <property type="evidence" value="ECO:0000318"/>
    <property type="project" value="GO_Central"/>
</dbReference>
<dbReference type="GO" id="GO:0005634">
    <property type="term" value="C:nucleus"/>
    <property type="evidence" value="ECO:0000266"/>
    <property type="project" value="RGD"/>
</dbReference>
<dbReference type="GO" id="GO:0031519">
    <property type="term" value="C:PcG protein complex"/>
    <property type="evidence" value="ECO:0000318"/>
    <property type="project" value="GO_Central"/>
</dbReference>
<dbReference type="GO" id="GO:0005667">
    <property type="term" value="C:transcription regulator complex"/>
    <property type="evidence" value="ECO:0000318"/>
    <property type="project" value="GO_Central"/>
</dbReference>
<dbReference type="GO" id="GO:0000987">
    <property type="term" value="F:cis-regulatory region sequence-specific DNA binding"/>
    <property type="evidence" value="ECO:0000266"/>
    <property type="project" value="RGD"/>
</dbReference>
<dbReference type="GO" id="GO:0001228">
    <property type="term" value="F:DNA-binding transcription activator activity, RNA polymerase II-specific"/>
    <property type="evidence" value="ECO:0000266"/>
    <property type="project" value="RGD"/>
</dbReference>
<dbReference type="GO" id="GO:0000981">
    <property type="term" value="F:DNA-binding transcription factor activity, RNA polymerase II-specific"/>
    <property type="evidence" value="ECO:0000318"/>
    <property type="project" value="GO_Central"/>
</dbReference>
<dbReference type="GO" id="GO:0000978">
    <property type="term" value="F:RNA polymerase II cis-regulatory region sequence-specific DNA binding"/>
    <property type="evidence" value="ECO:0000318"/>
    <property type="project" value="GO_Central"/>
</dbReference>
<dbReference type="GO" id="GO:0043565">
    <property type="term" value="F:sequence-specific DNA binding"/>
    <property type="evidence" value="ECO:0000266"/>
    <property type="project" value="RGD"/>
</dbReference>
<dbReference type="GO" id="GO:1990837">
    <property type="term" value="F:sequence-specific double-stranded DNA binding"/>
    <property type="evidence" value="ECO:0000266"/>
    <property type="project" value="RGD"/>
</dbReference>
<dbReference type="GO" id="GO:0008270">
    <property type="term" value="F:zinc ion binding"/>
    <property type="evidence" value="ECO:0007669"/>
    <property type="project" value="UniProtKB-KW"/>
</dbReference>
<dbReference type="GO" id="GO:0045944">
    <property type="term" value="P:positive regulation of transcription by RNA polymerase II"/>
    <property type="evidence" value="ECO:0000266"/>
    <property type="project" value="RGD"/>
</dbReference>
<dbReference type="GO" id="GO:0006357">
    <property type="term" value="P:regulation of transcription by RNA polymerase II"/>
    <property type="evidence" value="ECO:0000266"/>
    <property type="project" value="RGD"/>
</dbReference>
<dbReference type="FunFam" id="3.30.160.60:FF:000104">
    <property type="entry name" value="Transcriptional repressor protein YY1"/>
    <property type="match status" value="1"/>
</dbReference>
<dbReference type="FunFam" id="3.30.160.60:FF:000109">
    <property type="entry name" value="Transcriptional repressor protein YY1"/>
    <property type="match status" value="1"/>
</dbReference>
<dbReference type="FunFam" id="3.30.160.60:FF:000163">
    <property type="entry name" value="transcriptional repressor protein YY1"/>
    <property type="match status" value="1"/>
</dbReference>
<dbReference type="Gene3D" id="3.30.160.60">
    <property type="entry name" value="Classic Zinc Finger"/>
    <property type="match status" value="4"/>
</dbReference>
<dbReference type="InterPro" id="IPR017114">
    <property type="entry name" value="YY1-like"/>
</dbReference>
<dbReference type="InterPro" id="IPR036236">
    <property type="entry name" value="Znf_C2H2_sf"/>
</dbReference>
<dbReference type="InterPro" id="IPR013087">
    <property type="entry name" value="Znf_C2H2_type"/>
</dbReference>
<dbReference type="PANTHER" id="PTHR14003:SF11">
    <property type="entry name" value="TRANSCRIPTION FACTOR YY2"/>
    <property type="match status" value="1"/>
</dbReference>
<dbReference type="PANTHER" id="PTHR14003">
    <property type="entry name" value="TRANSCRIPTIONAL REPRESSOR PROTEIN YY"/>
    <property type="match status" value="1"/>
</dbReference>
<dbReference type="Pfam" id="PF00096">
    <property type="entry name" value="zf-C2H2"/>
    <property type="match status" value="4"/>
</dbReference>
<dbReference type="PIRSF" id="PIRSF037113">
    <property type="entry name" value="TF_Yin_yang"/>
    <property type="match status" value="1"/>
</dbReference>
<dbReference type="SMART" id="SM00355">
    <property type="entry name" value="ZnF_C2H2"/>
    <property type="match status" value="4"/>
</dbReference>
<dbReference type="SUPFAM" id="SSF57667">
    <property type="entry name" value="beta-beta-alpha zinc fingers"/>
    <property type="match status" value="3"/>
</dbReference>
<dbReference type="PROSITE" id="PS00028">
    <property type="entry name" value="ZINC_FINGER_C2H2_1"/>
    <property type="match status" value="4"/>
</dbReference>
<dbReference type="PROSITE" id="PS50157">
    <property type="entry name" value="ZINC_FINGER_C2H2_2"/>
    <property type="match status" value="4"/>
</dbReference>
<feature type="chain" id="PRO_0000324121" description="Transcription factor YY2">
    <location>
        <begin position="1"/>
        <end position="376"/>
    </location>
</feature>
<feature type="zinc finger region" description="C2H2-type 1" evidence="2">
    <location>
        <begin position="258"/>
        <end position="282"/>
    </location>
</feature>
<feature type="zinc finger region" description="C2H2-type 2" evidence="2">
    <location>
        <begin position="287"/>
        <end position="309"/>
    </location>
</feature>
<feature type="zinc finger region" description="C2H2-type 3" evidence="2">
    <location>
        <begin position="315"/>
        <end position="339"/>
    </location>
</feature>
<feature type="zinc finger region" description="C2H2-type 4" evidence="2">
    <location>
        <begin position="345"/>
        <end position="369"/>
    </location>
</feature>
<feature type="region of interest" description="Mediates transcriptional activation" evidence="1">
    <location>
        <begin position="36"/>
        <end position="109"/>
    </location>
</feature>
<feature type="region of interest" description="Disordered" evidence="3">
    <location>
        <begin position="201"/>
        <end position="220"/>
    </location>
</feature>
<feature type="region of interest" description="Mediates transcriptional repression" evidence="1">
    <location>
        <begin position="241"/>
        <end position="376"/>
    </location>
</feature>
<accession>P0C6P6</accession>
<comment type="function">
    <text evidence="1">Functions as a multifunctional transcription factor that may exhibit positive and negative control on a large number of genes. May antagonize YY1 and function in development and differentiation (By similarity).</text>
</comment>
<comment type="subcellular location">
    <subcellularLocation>
        <location evidence="4">Nucleus</location>
    </subcellularLocation>
</comment>
<comment type="miscellaneous">
    <text>The gene encoding this protein appears to have arisen by retrotransposition of the YY1 gene in placental mammals. It is encoded by a single exon found in an intron of the gene Mbtps2.</text>
</comment>
<comment type="similarity">
    <text evidence="4">Belongs to the YY transcription factor family.</text>
</comment>
<evidence type="ECO:0000250" key="1"/>
<evidence type="ECO:0000255" key="2">
    <source>
        <dbReference type="PROSITE-ProRule" id="PRU00042"/>
    </source>
</evidence>
<evidence type="ECO:0000256" key="3">
    <source>
        <dbReference type="SAM" id="MobiDB-lite"/>
    </source>
</evidence>
<evidence type="ECO:0000305" key="4"/>
<organism>
    <name type="scientific">Rattus norvegicus</name>
    <name type="common">Rat</name>
    <dbReference type="NCBI Taxonomy" id="10116"/>
    <lineage>
        <taxon>Eukaryota</taxon>
        <taxon>Metazoa</taxon>
        <taxon>Chordata</taxon>
        <taxon>Craniata</taxon>
        <taxon>Vertebrata</taxon>
        <taxon>Euteleostomi</taxon>
        <taxon>Mammalia</taxon>
        <taxon>Eutheria</taxon>
        <taxon>Euarchontoglires</taxon>
        <taxon>Glires</taxon>
        <taxon>Rodentia</taxon>
        <taxon>Myomorpha</taxon>
        <taxon>Muroidea</taxon>
        <taxon>Muridae</taxon>
        <taxon>Murinae</taxon>
        <taxon>Rattus</taxon>
    </lineage>
</organism>
<protein>
    <recommendedName>
        <fullName>Transcription factor YY2</fullName>
    </recommendedName>
    <alternativeName>
        <fullName>Yin and yang 2</fullName>
        <shortName>YY-2</shortName>
    </alternativeName>
</protein>
<reference key="1">
    <citation type="journal article" date="2004" name="Nature">
        <title>Genome sequence of the Brown Norway rat yields insights into mammalian evolution.</title>
        <authorList>
            <person name="Gibbs R.A."/>
            <person name="Weinstock G.M."/>
            <person name="Metzker M.L."/>
            <person name="Muzny D.M."/>
            <person name="Sodergren E.J."/>
            <person name="Scherer S."/>
            <person name="Scott G."/>
            <person name="Steffen D."/>
            <person name="Worley K.C."/>
            <person name="Burch P.E."/>
            <person name="Okwuonu G."/>
            <person name="Hines S."/>
            <person name="Lewis L."/>
            <person name="Deramo C."/>
            <person name="Delgado O."/>
            <person name="Dugan-Rocha S."/>
            <person name="Miner G."/>
            <person name="Morgan M."/>
            <person name="Hawes A."/>
            <person name="Gill R."/>
            <person name="Holt R.A."/>
            <person name="Adams M.D."/>
            <person name="Amanatides P.G."/>
            <person name="Baden-Tillson H."/>
            <person name="Barnstead M."/>
            <person name="Chin S."/>
            <person name="Evans C.A."/>
            <person name="Ferriera S."/>
            <person name="Fosler C."/>
            <person name="Glodek A."/>
            <person name="Gu Z."/>
            <person name="Jennings D."/>
            <person name="Kraft C.L."/>
            <person name="Nguyen T."/>
            <person name="Pfannkoch C.M."/>
            <person name="Sitter C."/>
            <person name="Sutton G.G."/>
            <person name="Venter J.C."/>
            <person name="Woodage T."/>
            <person name="Smith D."/>
            <person name="Lee H.-M."/>
            <person name="Gustafson E."/>
            <person name="Cahill P."/>
            <person name="Kana A."/>
            <person name="Doucette-Stamm L."/>
            <person name="Weinstock K."/>
            <person name="Fechtel K."/>
            <person name="Weiss R.B."/>
            <person name="Dunn D.M."/>
            <person name="Green E.D."/>
            <person name="Blakesley R.W."/>
            <person name="Bouffard G.G."/>
            <person name="De Jong P.J."/>
            <person name="Osoegawa K."/>
            <person name="Zhu B."/>
            <person name="Marra M."/>
            <person name="Schein J."/>
            <person name="Bosdet I."/>
            <person name="Fjell C."/>
            <person name="Jones S."/>
            <person name="Krzywinski M."/>
            <person name="Mathewson C."/>
            <person name="Siddiqui A."/>
            <person name="Wye N."/>
            <person name="McPherson J."/>
            <person name="Zhao S."/>
            <person name="Fraser C.M."/>
            <person name="Shetty J."/>
            <person name="Shatsman S."/>
            <person name="Geer K."/>
            <person name="Chen Y."/>
            <person name="Abramzon S."/>
            <person name="Nierman W.C."/>
            <person name="Havlak P.H."/>
            <person name="Chen R."/>
            <person name="Durbin K.J."/>
            <person name="Egan A."/>
            <person name="Ren Y."/>
            <person name="Song X.-Z."/>
            <person name="Li B."/>
            <person name="Liu Y."/>
            <person name="Qin X."/>
            <person name="Cawley S."/>
            <person name="Cooney A.J."/>
            <person name="D'Souza L.M."/>
            <person name="Martin K."/>
            <person name="Wu J.Q."/>
            <person name="Gonzalez-Garay M.L."/>
            <person name="Jackson A.R."/>
            <person name="Kalafus K.J."/>
            <person name="McLeod M.P."/>
            <person name="Milosavljevic A."/>
            <person name="Virk D."/>
            <person name="Volkov A."/>
            <person name="Wheeler D.A."/>
            <person name="Zhang Z."/>
            <person name="Bailey J.A."/>
            <person name="Eichler E.E."/>
            <person name="Tuzun E."/>
            <person name="Birney E."/>
            <person name="Mongin E."/>
            <person name="Ureta-Vidal A."/>
            <person name="Woodwark C."/>
            <person name="Zdobnov E."/>
            <person name="Bork P."/>
            <person name="Suyama M."/>
            <person name="Torrents D."/>
            <person name="Alexandersson M."/>
            <person name="Trask B.J."/>
            <person name="Young J.M."/>
            <person name="Huang H."/>
            <person name="Wang H."/>
            <person name="Xing H."/>
            <person name="Daniels S."/>
            <person name="Gietzen D."/>
            <person name="Schmidt J."/>
            <person name="Stevens K."/>
            <person name="Vitt U."/>
            <person name="Wingrove J."/>
            <person name="Camara F."/>
            <person name="Mar Alba M."/>
            <person name="Abril J.F."/>
            <person name="Guigo R."/>
            <person name="Smit A."/>
            <person name="Dubchak I."/>
            <person name="Rubin E.M."/>
            <person name="Couronne O."/>
            <person name="Poliakov A."/>
            <person name="Huebner N."/>
            <person name="Ganten D."/>
            <person name="Goesele C."/>
            <person name="Hummel O."/>
            <person name="Kreitler T."/>
            <person name="Lee Y.-A."/>
            <person name="Monti J."/>
            <person name="Schulz H."/>
            <person name="Zimdahl H."/>
            <person name="Himmelbauer H."/>
            <person name="Lehrach H."/>
            <person name="Jacob H.J."/>
            <person name="Bromberg S."/>
            <person name="Gullings-Handley J."/>
            <person name="Jensen-Seaman M.I."/>
            <person name="Kwitek A.E."/>
            <person name="Lazar J."/>
            <person name="Pasko D."/>
            <person name="Tonellato P.J."/>
            <person name="Twigger S."/>
            <person name="Ponting C.P."/>
            <person name="Duarte J.M."/>
            <person name="Rice S."/>
            <person name="Goodstadt L."/>
            <person name="Beatson S.A."/>
            <person name="Emes R.D."/>
            <person name="Winter E.E."/>
            <person name="Webber C."/>
            <person name="Brandt P."/>
            <person name="Nyakatura G."/>
            <person name="Adetobi M."/>
            <person name="Chiaromonte F."/>
            <person name="Elnitski L."/>
            <person name="Eswara P."/>
            <person name="Hardison R.C."/>
            <person name="Hou M."/>
            <person name="Kolbe D."/>
            <person name="Makova K."/>
            <person name="Miller W."/>
            <person name="Nekrutenko A."/>
            <person name="Riemer C."/>
            <person name="Schwartz S."/>
            <person name="Taylor J."/>
            <person name="Yang S."/>
            <person name="Zhang Y."/>
            <person name="Lindpaintner K."/>
            <person name="Andrews T.D."/>
            <person name="Caccamo M."/>
            <person name="Clamp M."/>
            <person name="Clarke L."/>
            <person name="Curwen V."/>
            <person name="Durbin R.M."/>
            <person name="Eyras E."/>
            <person name="Searle S.M."/>
            <person name="Cooper G.M."/>
            <person name="Batzoglou S."/>
            <person name="Brudno M."/>
            <person name="Sidow A."/>
            <person name="Stone E.A."/>
            <person name="Payseur B.A."/>
            <person name="Bourque G."/>
            <person name="Lopez-Otin C."/>
            <person name="Puente X.S."/>
            <person name="Chakrabarti K."/>
            <person name="Chatterji S."/>
            <person name="Dewey C."/>
            <person name="Pachter L."/>
            <person name="Bray N."/>
            <person name="Yap V.B."/>
            <person name="Caspi A."/>
            <person name="Tesler G."/>
            <person name="Pevzner P.A."/>
            <person name="Haussler D."/>
            <person name="Roskin K.M."/>
            <person name="Baertsch R."/>
            <person name="Clawson H."/>
            <person name="Furey T.S."/>
            <person name="Hinrichs A.S."/>
            <person name="Karolchik D."/>
            <person name="Kent W.J."/>
            <person name="Rosenbloom K.R."/>
            <person name="Trumbower H."/>
            <person name="Weirauch M."/>
            <person name="Cooper D.N."/>
            <person name="Stenson P.D."/>
            <person name="Ma B."/>
            <person name="Brent M."/>
            <person name="Arumugam M."/>
            <person name="Shteynberg D."/>
            <person name="Copley R.R."/>
            <person name="Taylor M.S."/>
            <person name="Riethman H."/>
            <person name="Mudunuri U."/>
            <person name="Peterson J."/>
            <person name="Guyer M."/>
            <person name="Felsenfeld A."/>
            <person name="Old S."/>
            <person name="Mockrin S."/>
            <person name="Collins F.S."/>
        </authorList>
    </citation>
    <scope>NUCLEOTIDE SEQUENCE [LARGE SCALE GENOMIC DNA]</scope>
    <source>
        <strain>Brown Norway</strain>
    </source>
</reference>
<gene>
    <name type="primary">Yy2</name>
</gene>
<name>TYY2_RAT</name>
<proteinExistence type="inferred from homology"/>
<sequence>MASDTEKLMCLTTENAEIPADFVELQPLDEIETVSLETNVSQTIEVYGDVGVDWAHGGHYHSPLIALQPLAGSNLSNGDHDQEMIIVQTREEVVDYQDSDNLLLGTEFESQMVLPVNEDDYLQPTTATFSGFMAAENGQDELSPYGGNLCGLTTIIEAGAEEGVNPDLGDKQWEQKQIQIDGLDGEFPFAMWEDNNLKEDPVAEEEAGESTPDYSEYMTGKKFPPEGIPGIDLSDPKQLAEFTSMKPKKPKGDFPRPVACSHKGCGKMFKDNSAMRKHLHIHGPRVHVCAECGKAFVESSKLKRHQLVHTGEKPYQCTFEGCGRRFSLDFNLRTHVRIHTGDKPFVCPFDACNKKFAQSTNLKSHILTHVKNKNDQ</sequence>